<reference key="1">
    <citation type="journal article" date="2005" name="Science">
        <title>Genome streamlining in a cosmopolitan oceanic bacterium.</title>
        <authorList>
            <person name="Giovannoni S.J."/>
            <person name="Tripp H.J."/>
            <person name="Givan S."/>
            <person name="Podar M."/>
            <person name="Vergin K.L."/>
            <person name="Baptista D."/>
            <person name="Bibbs L."/>
            <person name="Eads J."/>
            <person name="Richardson T.H."/>
            <person name="Noordewier M."/>
            <person name="Rappe M.S."/>
            <person name="Short J.M."/>
            <person name="Carrington J.C."/>
            <person name="Mathur E.J."/>
        </authorList>
    </citation>
    <scope>NUCLEOTIDE SEQUENCE [LARGE SCALE GENOMIC DNA]</scope>
    <source>
        <strain>HTCC1062</strain>
    </source>
</reference>
<dbReference type="EC" id="3.1.26.3" evidence="1"/>
<dbReference type="EMBL" id="CP000084">
    <property type="protein sequence ID" value="AAZ21859.1"/>
    <property type="molecule type" value="Genomic_DNA"/>
</dbReference>
<dbReference type="RefSeq" id="WP_006996872.1">
    <property type="nucleotide sequence ID" value="NC_007205.1"/>
</dbReference>
<dbReference type="SMR" id="Q4FLS9"/>
<dbReference type="STRING" id="335992.SAR11_1053"/>
<dbReference type="GeneID" id="66295544"/>
<dbReference type="KEGG" id="pub:SAR11_1053"/>
<dbReference type="eggNOG" id="COG0571">
    <property type="taxonomic scope" value="Bacteria"/>
</dbReference>
<dbReference type="HOGENOM" id="CLU_000907_1_1_5"/>
<dbReference type="OrthoDB" id="9805026at2"/>
<dbReference type="Proteomes" id="UP000002528">
    <property type="component" value="Chromosome"/>
</dbReference>
<dbReference type="GO" id="GO:0005737">
    <property type="term" value="C:cytoplasm"/>
    <property type="evidence" value="ECO:0007669"/>
    <property type="project" value="UniProtKB-SubCell"/>
</dbReference>
<dbReference type="GO" id="GO:0003725">
    <property type="term" value="F:double-stranded RNA binding"/>
    <property type="evidence" value="ECO:0007669"/>
    <property type="project" value="TreeGrafter"/>
</dbReference>
<dbReference type="GO" id="GO:0046872">
    <property type="term" value="F:metal ion binding"/>
    <property type="evidence" value="ECO:0007669"/>
    <property type="project" value="UniProtKB-KW"/>
</dbReference>
<dbReference type="GO" id="GO:0004525">
    <property type="term" value="F:ribonuclease III activity"/>
    <property type="evidence" value="ECO:0007669"/>
    <property type="project" value="UniProtKB-UniRule"/>
</dbReference>
<dbReference type="GO" id="GO:0019843">
    <property type="term" value="F:rRNA binding"/>
    <property type="evidence" value="ECO:0007669"/>
    <property type="project" value="UniProtKB-KW"/>
</dbReference>
<dbReference type="GO" id="GO:0006397">
    <property type="term" value="P:mRNA processing"/>
    <property type="evidence" value="ECO:0007669"/>
    <property type="project" value="UniProtKB-UniRule"/>
</dbReference>
<dbReference type="GO" id="GO:0010468">
    <property type="term" value="P:regulation of gene expression"/>
    <property type="evidence" value="ECO:0007669"/>
    <property type="project" value="TreeGrafter"/>
</dbReference>
<dbReference type="GO" id="GO:0006364">
    <property type="term" value="P:rRNA processing"/>
    <property type="evidence" value="ECO:0007669"/>
    <property type="project" value="UniProtKB-UniRule"/>
</dbReference>
<dbReference type="GO" id="GO:0008033">
    <property type="term" value="P:tRNA processing"/>
    <property type="evidence" value="ECO:0007669"/>
    <property type="project" value="UniProtKB-KW"/>
</dbReference>
<dbReference type="CDD" id="cd10845">
    <property type="entry name" value="DSRM_RNAse_III_family"/>
    <property type="match status" value="1"/>
</dbReference>
<dbReference type="CDD" id="cd00593">
    <property type="entry name" value="RIBOc"/>
    <property type="match status" value="1"/>
</dbReference>
<dbReference type="Gene3D" id="3.30.160.20">
    <property type="match status" value="1"/>
</dbReference>
<dbReference type="Gene3D" id="1.10.1520.10">
    <property type="entry name" value="Ribonuclease III domain"/>
    <property type="match status" value="1"/>
</dbReference>
<dbReference type="HAMAP" id="MF_00104">
    <property type="entry name" value="RNase_III"/>
    <property type="match status" value="1"/>
</dbReference>
<dbReference type="InterPro" id="IPR014720">
    <property type="entry name" value="dsRBD_dom"/>
</dbReference>
<dbReference type="InterPro" id="IPR011907">
    <property type="entry name" value="RNase_III"/>
</dbReference>
<dbReference type="InterPro" id="IPR000999">
    <property type="entry name" value="RNase_III_dom"/>
</dbReference>
<dbReference type="InterPro" id="IPR036389">
    <property type="entry name" value="RNase_III_sf"/>
</dbReference>
<dbReference type="NCBIfam" id="TIGR02191">
    <property type="entry name" value="RNaseIII"/>
    <property type="match status" value="1"/>
</dbReference>
<dbReference type="PANTHER" id="PTHR11207:SF0">
    <property type="entry name" value="RIBONUCLEASE 3"/>
    <property type="match status" value="1"/>
</dbReference>
<dbReference type="PANTHER" id="PTHR11207">
    <property type="entry name" value="RIBONUCLEASE III"/>
    <property type="match status" value="1"/>
</dbReference>
<dbReference type="Pfam" id="PF00035">
    <property type="entry name" value="dsrm"/>
    <property type="match status" value="1"/>
</dbReference>
<dbReference type="Pfam" id="PF14622">
    <property type="entry name" value="Ribonucleas_3_3"/>
    <property type="match status" value="1"/>
</dbReference>
<dbReference type="SMART" id="SM00358">
    <property type="entry name" value="DSRM"/>
    <property type="match status" value="1"/>
</dbReference>
<dbReference type="SMART" id="SM00535">
    <property type="entry name" value="RIBOc"/>
    <property type="match status" value="1"/>
</dbReference>
<dbReference type="SUPFAM" id="SSF54768">
    <property type="entry name" value="dsRNA-binding domain-like"/>
    <property type="match status" value="1"/>
</dbReference>
<dbReference type="SUPFAM" id="SSF69065">
    <property type="entry name" value="RNase III domain-like"/>
    <property type="match status" value="1"/>
</dbReference>
<dbReference type="PROSITE" id="PS50137">
    <property type="entry name" value="DS_RBD"/>
    <property type="match status" value="1"/>
</dbReference>
<dbReference type="PROSITE" id="PS50142">
    <property type="entry name" value="RNASE_3_2"/>
    <property type="match status" value="1"/>
</dbReference>
<comment type="function">
    <text evidence="1">Digests double-stranded RNA. Involved in the processing of primary rRNA transcript to yield the immediate precursors to the large and small rRNAs (23S and 16S). Processes some mRNAs, and tRNAs when they are encoded in the rRNA operon. Processes pre-crRNA and tracrRNA of type II CRISPR loci if present in the organism.</text>
</comment>
<comment type="catalytic activity">
    <reaction evidence="1">
        <text>Endonucleolytic cleavage to 5'-phosphomonoester.</text>
        <dbReference type="EC" id="3.1.26.3"/>
    </reaction>
</comment>
<comment type="cofactor">
    <cofactor evidence="1">
        <name>Mg(2+)</name>
        <dbReference type="ChEBI" id="CHEBI:18420"/>
    </cofactor>
</comment>
<comment type="subunit">
    <text evidence="1">Homodimer.</text>
</comment>
<comment type="subcellular location">
    <subcellularLocation>
        <location evidence="1">Cytoplasm</location>
    </subcellularLocation>
</comment>
<comment type="similarity">
    <text evidence="1">Belongs to the ribonuclease III family.</text>
</comment>
<proteinExistence type="inferred from homology"/>
<name>RNC_PELUB</name>
<keyword id="KW-0963">Cytoplasm</keyword>
<keyword id="KW-0255">Endonuclease</keyword>
<keyword id="KW-0378">Hydrolase</keyword>
<keyword id="KW-0460">Magnesium</keyword>
<keyword id="KW-0479">Metal-binding</keyword>
<keyword id="KW-0507">mRNA processing</keyword>
<keyword id="KW-0540">Nuclease</keyword>
<keyword id="KW-1185">Reference proteome</keyword>
<keyword id="KW-0694">RNA-binding</keyword>
<keyword id="KW-0698">rRNA processing</keyword>
<keyword id="KW-0699">rRNA-binding</keyword>
<keyword id="KW-0819">tRNA processing</keyword>
<accession>Q4FLS9</accession>
<feature type="chain" id="PRO_0000228560" description="Ribonuclease 3">
    <location>
        <begin position="1"/>
        <end position="222"/>
    </location>
</feature>
<feature type="domain" description="RNase III" evidence="1">
    <location>
        <begin position="5"/>
        <end position="127"/>
    </location>
</feature>
<feature type="domain" description="DRBM" evidence="1">
    <location>
        <begin position="152"/>
        <end position="221"/>
    </location>
</feature>
<feature type="active site" evidence="1">
    <location>
        <position position="45"/>
    </location>
</feature>
<feature type="active site" evidence="1">
    <location>
        <position position="116"/>
    </location>
</feature>
<feature type="binding site" evidence="1">
    <location>
        <position position="41"/>
    </location>
    <ligand>
        <name>Mg(2+)</name>
        <dbReference type="ChEBI" id="CHEBI:18420"/>
    </ligand>
</feature>
<feature type="binding site" evidence="1">
    <location>
        <position position="113"/>
    </location>
    <ligand>
        <name>Mg(2+)</name>
        <dbReference type="ChEBI" id="CHEBI:18420"/>
    </ligand>
</feature>
<feature type="binding site" evidence="1">
    <location>
        <position position="116"/>
    </location>
    <ligand>
        <name>Mg(2+)</name>
        <dbReference type="ChEBI" id="CHEBI:18420"/>
    </ligand>
</feature>
<evidence type="ECO:0000255" key="1">
    <source>
        <dbReference type="HAMAP-Rule" id="MF_00104"/>
    </source>
</evidence>
<gene>
    <name evidence="1" type="primary">rnc</name>
    <name type="ordered locus">SAR11_1053</name>
</gene>
<protein>
    <recommendedName>
        <fullName evidence="1">Ribonuclease 3</fullName>
        <ecNumber evidence="1">3.1.26.3</ecNumber>
    </recommendedName>
    <alternativeName>
        <fullName evidence="1">Ribonuclease III</fullName>
        <shortName evidence="1">RNase III</shortName>
    </alternativeName>
</protein>
<sequence>MKTNPIKLEKKLKLKFSDQKIFIKSLTHKSFDSINNNEKIEFLGDRVLGLIIAKKLLELYPDEKEGVLDKKFASLVNKKKCLEIAKKIELEKYILVLNPKNKKIEIEDKIVADCLEALIGAIYLDKGLNFTERFILNLWSEHITASVITQIDAKTKLQEYSLKIFKVLPIYKLISNTGPRHKPLFKVAVKLKNTKFFTAEGTSKKDAEQNAASLCLQDIFKK</sequence>
<organism>
    <name type="scientific">Pelagibacter ubique (strain HTCC1062)</name>
    <dbReference type="NCBI Taxonomy" id="335992"/>
    <lineage>
        <taxon>Bacteria</taxon>
        <taxon>Pseudomonadati</taxon>
        <taxon>Pseudomonadota</taxon>
        <taxon>Alphaproteobacteria</taxon>
        <taxon>Candidatus Pelagibacterales</taxon>
        <taxon>Candidatus Pelagibacteraceae</taxon>
        <taxon>Candidatus Pelagibacter</taxon>
    </lineage>
</organism>